<feature type="signal peptide" evidence="2">
    <location>
        <begin position="1" status="less than"/>
        <end position="19"/>
    </location>
</feature>
<feature type="propeptide" id="PRO_0000250427" evidence="3">
    <location>
        <begin position="20"/>
        <end position="39"/>
    </location>
</feature>
<feature type="peptide" id="PRO_0000250428" description="Distinctin-like peptide" evidence="3">
    <location>
        <begin position="42"/>
        <end position="77"/>
    </location>
</feature>
<feature type="non-terminal residue" evidence="5">
    <location>
        <position position="1"/>
    </location>
</feature>
<evidence type="ECO:0000250" key="1">
    <source>
        <dbReference type="UniProtKB" id="Q9PT75"/>
    </source>
</evidence>
<evidence type="ECO:0000255" key="2"/>
<evidence type="ECO:0000269" key="3">
    <source ref="1"/>
</evidence>
<evidence type="ECO:0000305" key="4"/>
<evidence type="ECO:0000312" key="5">
    <source>
        <dbReference type="EMBL" id="CAK51559.1"/>
    </source>
</evidence>
<sequence length="77" mass="9164">LKKSLFLVTFLALVPLFLCEEEKREEENEERQDDDQSEEKRNLVSALIEGRKYLKNVLKKLNRLKEKNKAKNSKENN</sequence>
<dbReference type="EMBL" id="AM269410">
    <property type="protein sequence ID" value="CAK51559.1"/>
    <property type="molecule type" value="mRNA"/>
</dbReference>
<dbReference type="SMR" id="Q17UZ0"/>
<dbReference type="GO" id="GO:0005576">
    <property type="term" value="C:extracellular region"/>
    <property type="evidence" value="ECO:0007669"/>
    <property type="project" value="UniProtKB-SubCell"/>
</dbReference>
<dbReference type="GO" id="GO:0006952">
    <property type="term" value="P:defense response"/>
    <property type="evidence" value="ECO:0007669"/>
    <property type="project" value="UniProtKB-KW"/>
</dbReference>
<dbReference type="InterPro" id="IPR004275">
    <property type="entry name" value="Frog_antimicrobial_propeptide"/>
</dbReference>
<dbReference type="Pfam" id="PF03032">
    <property type="entry name" value="FSAP_sig_propep"/>
    <property type="match status" value="1"/>
</dbReference>
<reference evidence="4 5" key="1">
    <citation type="thesis" date="2006" institute="University of Ulster Coleraine" country="United Kingdom">
        <title>A genomic/proteomic approach to isolating and identifying bioactive peptides from the skin secretions of Phyllomedusa hypochondrialis azurea.</title>
        <authorList>
            <person name="Thompson A.H."/>
        </authorList>
    </citation>
    <scope>NUCLEOTIDE SEQUENCE [MRNA]</scope>
    <scope>PROTEIN SEQUENCE OF 42-77</scope>
    <scope>SUBCELLULAR LOCATION</scope>
    <scope>TISSUE SPECIFICITY</scope>
    <source>
        <tissue evidence="5">Skin</tissue>
        <tissue evidence="3">Skin secretion</tissue>
    </source>
</reference>
<organism>
    <name type="scientific">Pithecopus azureus</name>
    <name type="common">Orange-legged monkey tree frog</name>
    <name type="synonym">Phyllomedusa azurea</name>
    <dbReference type="NCBI Taxonomy" id="2034991"/>
    <lineage>
        <taxon>Eukaryota</taxon>
        <taxon>Metazoa</taxon>
        <taxon>Chordata</taxon>
        <taxon>Craniata</taxon>
        <taxon>Vertebrata</taxon>
        <taxon>Euteleostomi</taxon>
        <taxon>Amphibia</taxon>
        <taxon>Batrachia</taxon>
        <taxon>Anura</taxon>
        <taxon>Neobatrachia</taxon>
        <taxon>Hyloidea</taxon>
        <taxon>Hylidae</taxon>
        <taxon>Phyllomedusinae</taxon>
        <taxon>Pithecopus</taxon>
    </lineage>
</organism>
<protein>
    <recommendedName>
        <fullName>Distinctin-like peptide</fullName>
    </recommendedName>
</protein>
<keyword id="KW-0878">Amphibian defense peptide</keyword>
<keyword id="KW-0929">Antimicrobial</keyword>
<keyword id="KW-0165">Cleavage on pair of basic residues</keyword>
<keyword id="KW-0903">Direct protein sequencing</keyword>
<keyword id="KW-0964">Secreted</keyword>
<keyword id="KW-0732">Signal</keyword>
<name>DISTL_PITAZ</name>
<gene>
    <name evidence="5" type="primary">ppdis-H1</name>
</gene>
<comment type="function">
    <text evidence="1">Has antimicrobial activity.</text>
</comment>
<comment type="subcellular location">
    <subcellularLocation>
        <location evidence="3">Secreted</location>
    </subcellularLocation>
</comment>
<comment type="tissue specificity">
    <text evidence="3">Expressed by the skin glands.</text>
</comment>
<comment type="similarity">
    <text evidence="4">Belongs to the frog skin active peptide (FSAP) family.</text>
</comment>
<proteinExistence type="evidence at protein level"/>
<accession>Q17UZ0</accession>